<organism>
    <name type="scientific">Drosophila melanogaster</name>
    <name type="common">Fruit fly</name>
    <dbReference type="NCBI Taxonomy" id="7227"/>
    <lineage>
        <taxon>Eukaryota</taxon>
        <taxon>Metazoa</taxon>
        <taxon>Ecdysozoa</taxon>
        <taxon>Arthropoda</taxon>
        <taxon>Hexapoda</taxon>
        <taxon>Insecta</taxon>
        <taxon>Pterygota</taxon>
        <taxon>Neoptera</taxon>
        <taxon>Endopterygota</taxon>
        <taxon>Diptera</taxon>
        <taxon>Brachycera</taxon>
        <taxon>Muscomorpha</taxon>
        <taxon>Ephydroidea</taxon>
        <taxon>Drosophilidae</taxon>
        <taxon>Drosophila</taxon>
        <taxon>Sophophora</taxon>
    </lineage>
</organism>
<protein>
    <recommendedName>
        <fullName evidence="13">NAD(+) hydrolase sarm1</fullName>
        <shortName evidence="13">NADase sarm1</shortName>
        <ecNumber evidence="8">3.2.2.6</ecNumber>
    </recommendedName>
    <alternativeName>
        <fullName evidence="12">Sterile alpha and TIR motif-containing protein 1</fullName>
    </alternativeName>
    <alternativeName>
        <fullName>Tir-1 homolog</fullName>
    </alternativeName>
</protein>
<keyword id="KW-0002">3D-structure</keyword>
<keyword id="KW-0025">Alternative splicing</keyword>
<keyword id="KW-0966">Cell projection</keyword>
<keyword id="KW-0963">Cytoplasm</keyword>
<keyword id="KW-0378">Hydrolase</keyword>
<keyword id="KW-0391">Immunity</keyword>
<keyword id="KW-0399">Innate immunity</keyword>
<keyword id="KW-0520">NAD</keyword>
<keyword id="KW-1185">Reference proteome</keyword>
<keyword id="KW-0677">Repeat</keyword>
<gene>
    <name evidence="12 14" type="primary">Sarm</name>
    <name evidence="11" type="synonym">Ect4</name>
    <name evidence="14" type="ORF">CG43119</name>
</gene>
<sequence>MKAAEIKRDLTNIQKSMSEINDLAKERITGGPGSISTTSASAITAPSTMSQTTTSRLAPKLTSAHPSIDDLRGLSRQDKITQLQKKIRASFENLVDHDDSNVIVTLPDDDDCPHNHFGSGLNLTHPTAAQLSASGLSGSSKTIDTIKFQEKSMKTESKTKVVTDGFSSEQATSNSAEMKRLQAGDIDYQESKGASAMRNRLEVDGVKTEENAAVIKEALSLRTGDITQQASNNVAASSITVQSENFSADKKAISQSQQSQTMTSNGIISQEKHVSSASQANYSMSHKGVSSTGSSMITSSSQMSAMNGQMLKLADLKLDDLKSLTAGSGQQEIEQTINKYSNMLTSIVSSLQEDERGGSAITVHDVGGKKSQYLEKINEVIRRAWAVPTHGHELGYSLCNSLRQSGGLDLLMKNCVKPDLQFSSAQLLEQCLTTENRKHVVDNGLDKVVNVACVCTKNSNMEHSRVGTGILEHLFKHSEGTCSDVIRLGGLDAVLFECRTSDLETLRHCASALANLSLYGGAENQEEMILRKVPMWLFPLAFHNDDNIKYYACLAIAVLVANKEIEAEVLKSGCLDLVEPFVTSHDPSAFARSNLAHAHGQSKHWLKRLVPVLSSNREEARNLAAFHFCMEAGIKREQGNTDIFREINAIEALKNVASCPNAIASKFAAQALRLIGETVPHKLSQQVPLWSVEDVQEWVKQIGFNDYIDKFNESQVDGDLLLKLNQDNLRADIGIGNGILLKRFERELQNLKRMADYSSKDTAKMHQFLSEIGTDYCTYTYAMLNAGIDKCALPHVNEDMLMTECGIHNSIHRLRILNAVKNLENSLPSSSEENMAKTLDVFVSYRRSNGSQLASLLKVHLQLRGFSVFIDVERLEAGKFDNGLLNSIRQAKNFVLVLTPDALHRCINDEDCKDWVHREIVAALNSNCNIIPIIDQQFDWPEVERLPEDMRSVAHFNGVNWIHDYQDACIDKLERFLRGEKNIDRIAAMVPGTPGSVSYQRMHSNDSDYQSGGAGAGSGAGTGGGGGGGVTGSVVDGLMVAANGSGQANHQANRYRQSPSPARQRGSTSQLSGYSRAPSKRSQILTPYRTQQAALLHKTGAGSASMQNMMPLAYLPPRRSSAAGLGHGSGSGMGSGYRSHSVDGLLDQAGSTPEQRIAAAAAKVTAGSTALTNASSTSTLQPEEEVTDAALNDSVTRRDKHTLSPPGNVQQHRKSRSLDHILSKQTLAELLPPSSELADGTQSMQNLAIPMTPQPQRRDTSSSSKSPTPERPPQPAMERVRERQSPEGVSATESEREDQPEECLRHGNQQRASASVHRGASLTSNKTSNSSLGSNFSAGGNNKTIFNRTMKKVRSLIKKP</sequence>
<comment type="function">
    <text evidence="6 7 8 9">NAD(+) hydrolase, which plays a key role in axonal degeneration following injury by regulating NAD(+) metabolism (PubMed:22678360, PubMed:28334607). Acts as a negative regulator of MYD88- and TRIF-dependent toll-like receptor signaling pathway by promoting Wallerian degeneration, an injury-induced form of programmed subcellular death which involves degeneration of an axon distal to the injury site (PubMed:22678360). Wallerian degeneration is triggered by NAD(+) depletion: in response to injury, it is activated and catalyzes cleavage of NAD(+) into ADP-D-ribose (ADPR), cyclic ADPR (cADPR) and nicotinamide; NAD(+) cleavage promoting axon destruction (PubMed:22678360, PubMed:28334607, PubMed:31439792). Involved in the down-regulation of the tracheal immune response to Gram-negative bacteria (PubMed:22022271). This is likely by mediating Tollo signaling in the tracheal epithelium (PubMed:22022271).</text>
</comment>
<comment type="catalytic activity">
    <reaction evidence="8 9">
        <text>NAD(+) + H2O = ADP-D-ribose + nicotinamide + H(+)</text>
        <dbReference type="Rhea" id="RHEA:16301"/>
        <dbReference type="ChEBI" id="CHEBI:15377"/>
        <dbReference type="ChEBI" id="CHEBI:15378"/>
        <dbReference type="ChEBI" id="CHEBI:17154"/>
        <dbReference type="ChEBI" id="CHEBI:57540"/>
        <dbReference type="ChEBI" id="CHEBI:57967"/>
        <dbReference type="EC" id="3.2.2.6"/>
    </reaction>
    <physiologicalReaction direction="left-to-right" evidence="8 9">
        <dbReference type="Rhea" id="RHEA:16302"/>
    </physiologicalReaction>
</comment>
<comment type="catalytic activity">
    <reaction evidence="8">
        <text>NAD(+) = cyclic ADP-beta-D-ribose + nicotinamide + H(+)</text>
        <dbReference type="Rhea" id="RHEA:38611"/>
        <dbReference type="ChEBI" id="CHEBI:15378"/>
        <dbReference type="ChEBI" id="CHEBI:17154"/>
        <dbReference type="ChEBI" id="CHEBI:57540"/>
        <dbReference type="ChEBI" id="CHEBI:73672"/>
    </reaction>
    <physiologicalReaction direction="left-to-right" evidence="8">
        <dbReference type="Rhea" id="RHEA:38612"/>
    </physiologicalReaction>
</comment>
<comment type="subcellular location">
    <subcellularLocation>
        <location evidence="1">Cytoplasm</location>
    </subcellularLocation>
    <subcellularLocation>
        <location evidence="7">Cell projection</location>
        <location evidence="7">Axon</location>
    </subcellularLocation>
</comment>
<comment type="alternative products">
    <event type="alternative splicing"/>
    <isoform>
        <id>Q6IDD9-1</id>
        <name>C</name>
        <sequence type="displayed"/>
    </isoform>
    <isoform>
        <id>Q6IDD9-2</id>
        <name>B</name>
        <sequence type="described" ref="VSP_013615 VSP_013616 VSP_013617"/>
    </isoform>
</comment>
<comment type="tissue specificity">
    <text>Widely expressed in larval brains and adult brains.</text>
</comment>
<comment type="domain">
    <text evidence="2">The TIR domain mediates NAD(+) hydrolase (NADase) activity. Self-association of TIR domains is required for NADase activity.</text>
</comment>
<comment type="disruption phenotype">
    <text evidence="6 7">Severed axons in wild-type flies disappear completely within a week of injury, whereas axons of neurons homozygous for any one of the three loss-of-function alleles: l(3)896, l(3)4621, and l(3)4705 persist for several weeks after severing (PubMed:22678360). After infection with Gram-negative bacteria, the respiratory epithelium displays an over-active immune response with a greater increase in expression of Drs compared to wild-type larvae (PubMed:22022271).</text>
</comment>
<comment type="similarity">
    <text evidence="13">Belongs to the SARM1 family.</text>
</comment>
<feature type="chain" id="PRO_0000097588" description="NAD(+) hydrolase sarm1">
    <location>
        <begin position="1"/>
        <end position="1360"/>
    </location>
</feature>
<feature type="domain" description="SAM 1" evidence="3">
    <location>
        <begin position="690"/>
        <end position="754"/>
    </location>
</feature>
<feature type="domain" description="SAM 2" evidence="3">
    <location>
        <begin position="760"/>
        <end position="828"/>
    </location>
</feature>
<feature type="domain" description="TIR" evidence="4">
    <location>
        <begin position="837"/>
        <end position="981"/>
    </location>
</feature>
<feature type="region of interest" description="Disordered" evidence="5">
    <location>
        <begin position="27"/>
        <end position="52"/>
    </location>
</feature>
<feature type="region of interest" description="Disordered" evidence="5">
    <location>
        <begin position="997"/>
        <end position="1026"/>
    </location>
</feature>
<feature type="region of interest" description="Disordered" evidence="5">
    <location>
        <begin position="1046"/>
        <end position="1085"/>
    </location>
</feature>
<feature type="region of interest" description="Disordered" evidence="5">
    <location>
        <begin position="1121"/>
        <end position="1148"/>
    </location>
</feature>
<feature type="region of interest" description="Disordered" evidence="5">
    <location>
        <begin position="1192"/>
        <end position="1217"/>
    </location>
</feature>
<feature type="region of interest" description="Disordered" evidence="5">
    <location>
        <begin position="1249"/>
        <end position="1343"/>
    </location>
</feature>
<feature type="compositionally biased region" description="Low complexity" evidence="5">
    <location>
        <begin position="34"/>
        <end position="48"/>
    </location>
</feature>
<feature type="compositionally biased region" description="Polar residues" evidence="5">
    <location>
        <begin position="997"/>
        <end position="1010"/>
    </location>
</feature>
<feature type="compositionally biased region" description="Gly residues" evidence="5">
    <location>
        <begin position="1012"/>
        <end position="1026"/>
    </location>
</feature>
<feature type="compositionally biased region" description="Polar residues" evidence="5">
    <location>
        <begin position="1046"/>
        <end position="1073"/>
    </location>
</feature>
<feature type="compositionally biased region" description="Gly residues" evidence="5">
    <location>
        <begin position="1125"/>
        <end position="1135"/>
    </location>
</feature>
<feature type="compositionally biased region" description="Low complexity" evidence="5">
    <location>
        <begin position="1321"/>
        <end position="1335"/>
    </location>
</feature>
<feature type="active site" evidence="4">
    <location>
        <position position="919"/>
    </location>
</feature>
<feature type="binding site" evidence="4">
    <location>
        <begin position="846"/>
        <end position="847"/>
    </location>
    <ligand>
        <name>NAD(+)</name>
        <dbReference type="ChEBI" id="CHEBI:57540"/>
        <note>substrate</note>
    </ligand>
</feature>
<feature type="binding site" evidence="4">
    <location>
        <position position="876"/>
    </location>
    <ligand>
        <name>NAD(+)</name>
        <dbReference type="ChEBI" id="CHEBI:57540"/>
        <note>substrate</note>
    </ligand>
</feature>
<feature type="splice variant" id="VSP_013615" description="In isoform B." evidence="10">
    <original>MKAAEIKRDLTNIQKSMSEINDLAKERITGGPGSISTTSASAITAPSTMSQTTTSRLAPKLTSAHPSIDDLRGLSRQDKITQLQKKIRASFENLVDHDDSNVIVTLPDDDDCPHNHFGSGLNLTHPTAAQLSASGLSGSSKTIDTIKFQEKSMKTESKTKVVTDGFSSEQATSNSAEMKRLQAGDIDYQESKGASAMRNRLEVDGVKTEENAAVI</original>
    <variation>MSNQAPWPVRKGIFRSSGQSDFTPTRSPSPIVEMPLSPPPVATPSNRFGINSPLSPPPQPIQVVAGSTTATTMSTASAARVSGAAASTSSSSSSSSSSQCSSQTSSSSSSHTRVRKSSNPPPQPITSCPLSPPPPPPPQQQQQLPQQLPPPTPINNTNHSAITTPNHNNNHNCNQMRNVREIPIEVEQS</variation>
    <location>
        <begin position="1"/>
        <end position="215"/>
    </location>
</feature>
<feature type="splice variant" id="VSP_013616" description="In isoform B." evidence="10">
    <original>ANHQANRYRQSPSPARQRGSTSQLSGYSRAP</original>
    <variation>GGPTSTTSTTSSTPNSNSSSSSNQSPPAAPA</variation>
    <location>
        <begin position="1048"/>
        <end position="1078"/>
    </location>
</feature>
<feature type="splice variant" id="VSP_013617" description="In isoform B." evidence="10">
    <location>
        <begin position="1079"/>
        <end position="1360"/>
    </location>
</feature>
<feature type="helix" evidence="17">
    <location>
        <begin position="335"/>
        <end position="348"/>
    </location>
</feature>
<feature type="helix" evidence="16">
    <location>
        <begin position="375"/>
        <end position="386"/>
    </location>
</feature>
<feature type="turn" evidence="16">
    <location>
        <begin position="388"/>
        <end position="390"/>
    </location>
</feature>
<feature type="helix" evidence="16">
    <location>
        <begin position="391"/>
        <end position="404"/>
    </location>
</feature>
<feature type="helix" evidence="16">
    <location>
        <begin position="407"/>
        <end position="414"/>
    </location>
</feature>
<feature type="turn" evidence="16">
    <location>
        <begin position="418"/>
        <end position="420"/>
    </location>
</feature>
<feature type="helix" evidence="16">
    <location>
        <begin position="421"/>
        <end position="430"/>
    </location>
</feature>
<feature type="helix" evidence="16">
    <location>
        <begin position="434"/>
        <end position="443"/>
    </location>
</feature>
<feature type="helix" evidence="16">
    <location>
        <begin position="445"/>
        <end position="456"/>
    </location>
</feature>
<feature type="strand" evidence="15">
    <location>
        <begin position="457"/>
        <end position="460"/>
    </location>
</feature>
<feature type="helix" evidence="16">
    <location>
        <begin position="461"/>
        <end position="474"/>
    </location>
</feature>
<feature type="helix" evidence="16">
    <location>
        <begin position="479"/>
        <end position="487"/>
    </location>
</feature>
<feature type="helix" evidence="16">
    <location>
        <begin position="490"/>
        <end position="497"/>
    </location>
</feature>
<feature type="helix" evidence="16">
    <location>
        <begin position="503"/>
        <end position="519"/>
    </location>
</feature>
<feature type="helix" evidence="16">
    <location>
        <begin position="522"/>
        <end position="530"/>
    </location>
</feature>
<feature type="helix" evidence="16">
    <location>
        <begin position="533"/>
        <end position="541"/>
    </location>
</feature>
<feature type="helix" evidence="16">
    <location>
        <begin position="546"/>
        <end position="559"/>
    </location>
</feature>
<feature type="helix" evidence="16">
    <location>
        <begin position="563"/>
        <end position="572"/>
    </location>
</feature>
<feature type="helix" evidence="16">
    <location>
        <begin position="574"/>
        <end position="577"/>
    </location>
</feature>
<feature type="helix" evidence="16">
    <location>
        <begin position="578"/>
        <end position="584"/>
    </location>
</feature>
<feature type="helix" evidence="16">
    <location>
        <begin position="587"/>
        <end position="591"/>
    </location>
</feature>
<feature type="helix" evidence="16">
    <location>
        <begin position="595"/>
        <end position="597"/>
    </location>
</feature>
<feature type="helix" evidence="16">
    <location>
        <begin position="603"/>
        <end position="609"/>
    </location>
</feature>
<feature type="helix" evidence="16">
    <location>
        <begin position="610"/>
        <end position="614"/>
    </location>
</feature>
<feature type="helix" evidence="16">
    <location>
        <begin position="618"/>
        <end position="638"/>
    </location>
</feature>
<feature type="helix" evidence="16">
    <location>
        <begin position="642"/>
        <end position="646"/>
    </location>
</feature>
<feature type="helix" evidence="16">
    <location>
        <begin position="650"/>
        <end position="657"/>
    </location>
</feature>
<feature type="helix" evidence="16">
    <location>
        <begin position="662"/>
        <end position="675"/>
    </location>
</feature>
<reference key="1">
    <citation type="journal article" date="2000" name="Science">
        <title>The genome sequence of Drosophila melanogaster.</title>
        <authorList>
            <person name="Adams M.D."/>
            <person name="Celniker S.E."/>
            <person name="Holt R.A."/>
            <person name="Evans C.A."/>
            <person name="Gocayne J.D."/>
            <person name="Amanatides P.G."/>
            <person name="Scherer S.E."/>
            <person name="Li P.W."/>
            <person name="Hoskins R.A."/>
            <person name="Galle R.F."/>
            <person name="George R.A."/>
            <person name="Lewis S.E."/>
            <person name="Richards S."/>
            <person name="Ashburner M."/>
            <person name="Henderson S.N."/>
            <person name="Sutton G.G."/>
            <person name="Wortman J.R."/>
            <person name="Yandell M.D."/>
            <person name="Zhang Q."/>
            <person name="Chen L.X."/>
            <person name="Brandon R.C."/>
            <person name="Rogers Y.-H.C."/>
            <person name="Blazej R.G."/>
            <person name="Champe M."/>
            <person name="Pfeiffer B.D."/>
            <person name="Wan K.H."/>
            <person name="Doyle C."/>
            <person name="Baxter E.G."/>
            <person name="Helt G."/>
            <person name="Nelson C.R."/>
            <person name="Miklos G.L.G."/>
            <person name="Abril J.F."/>
            <person name="Agbayani A."/>
            <person name="An H.-J."/>
            <person name="Andrews-Pfannkoch C."/>
            <person name="Baldwin D."/>
            <person name="Ballew R.M."/>
            <person name="Basu A."/>
            <person name="Baxendale J."/>
            <person name="Bayraktaroglu L."/>
            <person name="Beasley E.M."/>
            <person name="Beeson K.Y."/>
            <person name="Benos P.V."/>
            <person name="Berman B.P."/>
            <person name="Bhandari D."/>
            <person name="Bolshakov S."/>
            <person name="Borkova D."/>
            <person name="Botchan M.R."/>
            <person name="Bouck J."/>
            <person name="Brokstein P."/>
            <person name="Brottier P."/>
            <person name="Burtis K.C."/>
            <person name="Busam D.A."/>
            <person name="Butler H."/>
            <person name="Cadieu E."/>
            <person name="Center A."/>
            <person name="Chandra I."/>
            <person name="Cherry J.M."/>
            <person name="Cawley S."/>
            <person name="Dahlke C."/>
            <person name="Davenport L.B."/>
            <person name="Davies P."/>
            <person name="de Pablos B."/>
            <person name="Delcher A."/>
            <person name="Deng Z."/>
            <person name="Mays A.D."/>
            <person name="Dew I."/>
            <person name="Dietz S.M."/>
            <person name="Dodson K."/>
            <person name="Doup L.E."/>
            <person name="Downes M."/>
            <person name="Dugan-Rocha S."/>
            <person name="Dunkov B.C."/>
            <person name="Dunn P."/>
            <person name="Durbin K.J."/>
            <person name="Evangelista C.C."/>
            <person name="Ferraz C."/>
            <person name="Ferriera S."/>
            <person name="Fleischmann W."/>
            <person name="Fosler C."/>
            <person name="Gabrielian A.E."/>
            <person name="Garg N.S."/>
            <person name="Gelbart W.M."/>
            <person name="Glasser K."/>
            <person name="Glodek A."/>
            <person name="Gong F."/>
            <person name="Gorrell J.H."/>
            <person name="Gu Z."/>
            <person name="Guan P."/>
            <person name="Harris M."/>
            <person name="Harris N.L."/>
            <person name="Harvey D.A."/>
            <person name="Heiman T.J."/>
            <person name="Hernandez J.R."/>
            <person name="Houck J."/>
            <person name="Hostin D."/>
            <person name="Houston K.A."/>
            <person name="Howland T.J."/>
            <person name="Wei M.-H."/>
            <person name="Ibegwam C."/>
            <person name="Jalali M."/>
            <person name="Kalush F."/>
            <person name="Karpen G.H."/>
            <person name="Ke Z."/>
            <person name="Kennison J.A."/>
            <person name="Ketchum K.A."/>
            <person name="Kimmel B.E."/>
            <person name="Kodira C.D."/>
            <person name="Kraft C.L."/>
            <person name="Kravitz S."/>
            <person name="Kulp D."/>
            <person name="Lai Z."/>
            <person name="Lasko P."/>
            <person name="Lei Y."/>
            <person name="Levitsky A.A."/>
            <person name="Li J.H."/>
            <person name="Li Z."/>
            <person name="Liang Y."/>
            <person name="Lin X."/>
            <person name="Liu X."/>
            <person name="Mattei B."/>
            <person name="McIntosh T.C."/>
            <person name="McLeod M.P."/>
            <person name="McPherson D."/>
            <person name="Merkulov G."/>
            <person name="Milshina N.V."/>
            <person name="Mobarry C."/>
            <person name="Morris J."/>
            <person name="Moshrefi A."/>
            <person name="Mount S.M."/>
            <person name="Moy M."/>
            <person name="Murphy B."/>
            <person name="Murphy L."/>
            <person name="Muzny D.M."/>
            <person name="Nelson D.L."/>
            <person name="Nelson D.R."/>
            <person name="Nelson K.A."/>
            <person name="Nixon K."/>
            <person name="Nusskern D.R."/>
            <person name="Pacleb J.M."/>
            <person name="Palazzolo M."/>
            <person name="Pittman G.S."/>
            <person name="Pan S."/>
            <person name="Pollard J."/>
            <person name="Puri V."/>
            <person name="Reese M.G."/>
            <person name="Reinert K."/>
            <person name="Remington K."/>
            <person name="Saunders R.D.C."/>
            <person name="Scheeler F."/>
            <person name="Shen H."/>
            <person name="Shue B.C."/>
            <person name="Siden-Kiamos I."/>
            <person name="Simpson M."/>
            <person name="Skupski M.P."/>
            <person name="Smith T.J."/>
            <person name="Spier E."/>
            <person name="Spradling A.C."/>
            <person name="Stapleton M."/>
            <person name="Strong R."/>
            <person name="Sun E."/>
            <person name="Svirskas R."/>
            <person name="Tector C."/>
            <person name="Turner R."/>
            <person name="Venter E."/>
            <person name="Wang A.H."/>
            <person name="Wang X."/>
            <person name="Wang Z.-Y."/>
            <person name="Wassarman D.A."/>
            <person name="Weinstock G.M."/>
            <person name="Weissenbach J."/>
            <person name="Williams S.M."/>
            <person name="Woodage T."/>
            <person name="Worley K.C."/>
            <person name="Wu D."/>
            <person name="Yang S."/>
            <person name="Yao Q.A."/>
            <person name="Ye J."/>
            <person name="Yeh R.-F."/>
            <person name="Zaveri J.S."/>
            <person name="Zhan M."/>
            <person name="Zhang G."/>
            <person name="Zhao Q."/>
            <person name="Zheng L."/>
            <person name="Zheng X.H."/>
            <person name="Zhong F.N."/>
            <person name="Zhong W."/>
            <person name="Zhou X."/>
            <person name="Zhu S.C."/>
            <person name="Zhu X."/>
            <person name="Smith H.O."/>
            <person name="Gibbs R.A."/>
            <person name="Myers E.W."/>
            <person name="Rubin G.M."/>
            <person name="Venter J.C."/>
        </authorList>
    </citation>
    <scope>NUCLEOTIDE SEQUENCE [LARGE SCALE GENOMIC DNA]</scope>
    <source>
        <strain>Berkeley</strain>
    </source>
</reference>
<reference key="2">
    <citation type="journal article" date="2002" name="Genome Biol.">
        <title>Annotation of the Drosophila melanogaster euchromatic genome: a systematic review.</title>
        <authorList>
            <person name="Misra S."/>
            <person name="Crosby M.A."/>
            <person name="Mungall C.J."/>
            <person name="Matthews B.B."/>
            <person name="Campbell K.S."/>
            <person name="Hradecky P."/>
            <person name="Huang Y."/>
            <person name="Kaminker J.S."/>
            <person name="Millburn G.H."/>
            <person name="Prochnik S.E."/>
            <person name="Smith C.D."/>
            <person name="Tupy J.L."/>
            <person name="Whitfield E.J."/>
            <person name="Bayraktaroglu L."/>
            <person name="Berman B.P."/>
            <person name="Bettencourt B.R."/>
            <person name="Celniker S.E."/>
            <person name="de Grey A.D.N.J."/>
            <person name="Drysdale R.A."/>
            <person name="Harris N.L."/>
            <person name="Richter J."/>
            <person name="Russo S."/>
            <person name="Schroeder A.J."/>
            <person name="Shu S.Q."/>
            <person name="Stapleton M."/>
            <person name="Yamada C."/>
            <person name="Ashburner M."/>
            <person name="Gelbart W.M."/>
            <person name="Rubin G.M."/>
            <person name="Lewis S.E."/>
        </authorList>
    </citation>
    <scope>GENOME REANNOTATION</scope>
    <scope>ALTERNATIVE SPLICING</scope>
    <source>
        <strain>Berkeley</strain>
    </source>
</reference>
<reference key="3">
    <citation type="journal article" date="2002" name="Genome Biol.">
        <title>A Drosophila full-length cDNA resource.</title>
        <authorList>
            <person name="Stapleton M."/>
            <person name="Carlson J.W."/>
            <person name="Brokstein P."/>
            <person name="Yu C."/>
            <person name="Champe M."/>
            <person name="George R.A."/>
            <person name="Guarin H."/>
            <person name="Kronmiller B."/>
            <person name="Pacleb J.M."/>
            <person name="Park S."/>
            <person name="Wan K.H."/>
            <person name="Rubin G.M."/>
            <person name="Celniker S.E."/>
        </authorList>
    </citation>
    <scope>NUCLEOTIDE SEQUENCE [LARGE SCALE MRNA] (ISOFORM B)</scope>
    <source>
        <strain>Berkeley</strain>
        <tissue>Head</tissue>
    </source>
</reference>
<reference key="4">
    <citation type="submission" date="2004-05" db="EMBL/GenBank/DDBJ databases">
        <authorList>
            <person name="Stapleton M."/>
            <person name="Carlson J.W."/>
            <person name="Chavez C."/>
            <person name="Frise E."/>
            <person name="George R.A."/>
            <person name="Pacleb J.M."/>
            <person name="Park S."/>
            <person name="Wan K.H."/>
            <person name="Yu C."/>
            <person name="Rubin G.M."/>
            <person name="Celniker S.E."/>
        </authorList>
    </citation>
    <scope>NUCLEOTIDE SEQUENCE [LARGE SCALE MRNA] (ISOFORM C)</scope>
    <source>
        <strain>Berkeley</strain>
        <tissue>Head</tissue>
    </source>
</reference>
<reference key="5">
    <citation type="journal article" date="2011" name="PLoS Pathog.">
        <title>Toll-8/Tollo negatively regulates antimicrobial response in the Drosophila respiratory epithelium.</title>
        <authorList>
            <person name="Akhouayri I."/>
            <person name="Turc C."/>
            <person name="Royet J."/>
            <person name="Charroux B."/>
        </authorList>
    </citation>
    <scope>FUNCTION</scope>
    <scope>DISRUPTION PHENOTYPE</scope>
</reference>
<reference key="6">
    <citation type="journal article" date="2012" name="Science">
        <title>Neuroscience. dSarm-ing axon degeneration.</title>
        <authorList>
            <person name="Yu X.M."/>
            <person name="Luo L."/>
        </authorList>
    </citation>
    <scope>REVIEW</scope>
</reference>
<reference key="7">
    <citation type="journal article" date="2012" name="Science">
        <title>dSarm/Sarm1 is required for activation of an injury-induced axon death pathway.</title>
        <authorList>
            <person name="Osterloh J.M."/>
            <person name="Yang J."/>
            <person name="Rooney T.M."/>
            <person name="Fox A.N."/>
            <person name="Adalbert R."/>
            <person name="Powell E.H."/>
            <person name="Sheehan A.E."/>
            <person name="Avery M.A."/>
            <person name="Hackett R."/>
            <person name="Logan M.A."/>
            <person name="MacDonald J.M."/>
            <person name="Ziegenfuss J.S."/>
            <person name="Milde S."/>
            <person name="Hou Y.J."/>
            <person name="Nathan C."/>
            <person name="Ding A."/>
            <person name="Brown R.H. Jr."/>
            <person name="Conforti L."/>
            <person name="Coleman M."/>
            <person name="Tessier-Lavigne M."/>
            <person name="Zuechner S."/>
            <person name="Freeman M.R."/>
        </authorList>
    </citation>
    <scope>FUNCTION</scope>
    <scope>SUBCELLULAR LOCATION</scope>
    <scope>DISRUPTION PHENOTYPE</scope>
</reference>
<reference key="8">
    <citation type="journal article" date="2017" name="Neuron">
        <title>The SARM1 Toll/Interleukin-1 receptor domain possesses intrinsic NAD+ cleavage activity that promotes pathological axonal degeneration.</title>
        <authorList>
            <person name="Essuman K."/>
            <person name="Summers D.W."/>
            <person name="Sasaki Y."/>
            <person name="Mao X."/>
            <person name="DiAntonio A."/>
            <person name="Milbrandt J."/>
        </authorList>
    </citation>
    <scope>FUNCTION</scope>
    <scope>CATALYTIC ACTIVITY</scope>
</reference>
<reference key="9">
    <citation type="journal article" date="2019" name="Science">
        <title>NAD+ cleavage activity by animal and plant TIR domains in cell death pathways.</title>
        <authorList>
            <person name="Horsefield S."/>
            <person name="Burdett H."/>
            <person name="Zhang X."/>
            <person name="Manik M.K."/>
            <person name="Shi Y."/>
            <person name="Chen J."/>
            <person name="Qi T."/>
            <person name="Gilley J."/>
            <person name="Lai J.S."/>
            <person name="Rank M.X."/>
            <person name="Casey L.W."/>
            <person name="Gu W."/>
            <person name="Ericsson D.J."/>
            <person name="Foley G."/>
            <person name="Hughes R.O."/>
            <person name="Bosanac T."/>
            <person name="von Itzstein M."/>
            <person name="Rathjen J.P."/>
            <person name="Nanson J.D."/>
            <person name="Boden M."/>
            <person name="Dry I.B."/>
            <person name="Williams S.J."/>
            <person name="Staskawicz B.J."/>
            <person name="Coleman M.P."/>
            <person name="Ve T."/>
            <person name="Dodds P.N."/>
            <person name="Kobe B."/>
        </authorList>
    </citation>
    <scope>FUNCTION</scope>
    <scope>CATALYTIC ACTIVITY</scope>
</reference>
<name>SARM1_DROME</name>
<accession>Q6IDD9</accession>
<accession>Q0E8H1</accession>
<accession>Q7KUA2</accession>
<accession>Q8SY48</accession>
<accession>Q9VSD2</accession>
<evidence type="ECO:0000250" key="1">
    <source>
        <dbReference type="UniProtKB" id="Q6PDS3"/>
    </source>
</evidence>
<evidence type="ECO:0000250" key="2">
    <source>
        <dbReference type="UniProtKB" id="Q6SZW1"/>
    </source>
</evidence>
<evidence type="ECO:0000255" key="3">
    <source>
        <dbReference type="PROSITE-ProRule" id="PRU00184"/>
    </source>
</evidence>
<evidence type="ECO:0000255" key="4">
    <source>
        <dbReference type="PROSITE-ProRule" id="PRU00204"/>
    </source>
</evidence>
<evidence type="ECO:0000256" key="5">
    <source>
        <dbReference type="SAM" id="MobiDB-lite"/>
    </source>
</evidence>
<evidence type="ECO:0000269" key="6">
    <source>
    </source>
</evidence>
<evidence type="ECO:0000269" key="7">
    <source>
    </source>
</evidence>
<evidence type="ECO:0000269" key="8">
    <source>
    </source>
</evidence>
<evidence type="ECO:0000269" key="9">
    <source>
    </source>
</evidence>
<evidence type="ECO:0000303" key="10">
    <source>
    </source>
</evidence>
<evidence type="ECO:0000303" key="11">
    <source>
    </source>
</evidence>
<evidence type="ECO:0000303" key="12">
    <source>
    </source>
</evidence>
<evidence type="ECO:0000305" key="13"/>
<evidence type="ECO:0000312" key="14">
    <source>
        <dbReference type="FlyBase" id="FBgn0262579"/>
    </source>
</evidence>
<evidence type="ECO:0007829" key="15">
    <source>
        <dbReference type="PDB" id="7LCY"/>
    </source>
</evidence>
<evidence type="ECO:0007829" key="16">
    <source>
        <dbReference type="PDB" id="7LCZ"/>
    </source>
</evidence>
<evidence type="ECO:0007829" key="17">
    <source>
        <dbReference type="PDB" id="7RTC"/>
    </source>
</evidence>
<proteinExistence type="evidence at protein level"/>
<dbReference type="EC" id="3.2.2.6" evidence="8"/>
<dbReference type="EMBL" id="AE014296">
    <property type="protein sequence ID" value="AAN12011.1"/>
    <property type="molecule type" value="Genomic_DNA"/>
</dbReference>
<dbReference type="EMBL" id="AE014296">
    <property type="protein sequence ID" value="ABI31243.1"/>
    <property type="molecule type" value="Genomic_DNA"/>
</dbReference>
<dbReference type="EMBL" id="AY075346">
    <property type="protein sequence ID" value="AAL68207.1"/>
    <property type="molecule type" value="mRNA"/>
</dbReference>
<dbReference type="EMBL" id="BT014666">
    <property type="protein sequence ID" value="AAT27290.1"/>
    <property type="molecule type" value="mRNA"/>
</dbReference>
<dbReference type="RefSeq" id="NP_001036594.1">
    <molecule id="Q6IDD9-1"/>
    <property type="nucleotide sequence ID" value="NM_001043129.3"/>
</dbReference>
<dbReference type="RefSeq" id="NP_729327.1">
    <molecule id="Q6IDD9-2"/>
    <property type="nucleotide sequence ID" value="NM_168254.2"/>
</dbReference>
<dbReference type="PDB" id="7LCY">
    <property type="method" value="X-ray"/>
    <property type="resolution" value="3.35 A"/>
    <property type="chains" value="A/B/C=314-678"/>
</dbReference>
<dbReference type="PDB" id="7LCZ">
    <property type="method" value="X-ray"/>
    <property type="resolution" value="1.65 A"/>
    <property type="chains" value="A/B=370-678"/>
</dbReference>
<dbReference type="PDB" id="7M6K">
    <property type="method" value="X-ray"/>
    <property type="resolution" value="1.69 A"/>
    <property type="chains" value="A/B=369-678"/>
</dbReference>
<dbReference type="PDB" id="7RTC">
    <property type="method" value="X-ray"/>
    <property type="resolution" value="3.31 A"/>
    <property type="chains" value="A/B/C=315-678"/>
</dbReference>
<dbReference type="PDBsum" id="7LCY"/>
<dbReference type="PDBsum" id="7LCZ"/>
<dbReference type="PDBsum" id="7M6K"/>
<dbReference type="PDBsum" id="7RTC"/>
<dbReference type="SMR" id="Q6IDD9"/>
<dbReference type="BioGRID" id="64320">
    <property type="interactions" value="18"/>
</dbReference>
<dbReference type="FunCoup" id="Q6IDD9">
    <property type="interactions" value="37"/>
</dbReference>
<dbReference type="IntAct" id="Q6IDD9">
    <property type="interactions" value="55"/>
</dbReference>
<dbReference type="STRING" id="7227.FBpp0293535"/>
<dbReference type="PaxDb" id="7227-FBpp0293535"/>
<dbReference type="DNASU" id="38895"/>
<dbReference type="EnsemblMetazoa" id="FBtr0304994">
    <molecule id="Q6IDD9-2"/>
    <property type="protein sequence ID" value="FBpp0293531"/>
    <property type="gene ID" value="FBgn0262579"/>
</dbReference>
<dbReference type="EnsemblMetazoa" id="FBtr0304995">
    <molecule id="Q6IDD9-1"/>
    <property type="protein sequence ID" value="FBpp0293532"/>
    <property type="gene ID" value="FBgn0262579"/>
</dbReference>
<dbReference type="GeneID" id="38895"/>
<dbReference type="KEGG" id="dme:Dmel_CG43119"/>
<dbReference type="UCSC" id="CG34373-RE">
    <molecule id="Q6IDD9-1"/>
    <property type="organism name" value="d. melanogaster"/>
</dbReference>
<dbReference type="AGR" id="FB:FBgn0262579"/>
<dbReference type="CTD" id="38895"/>
<dbReference type="FlyBase" id="FBgn0262579">
    <property type="gene designation" value="Sarm"/>
</dbReference>
<dbReference type="VEuPathDB" id="VectorBase:FBgn0262579"/>
<dbReference type="eggNOG" id="KOG3678">
    <property type="taxonomic scope" value="Eukaryota"/>
</dbReference>
<dbReference type="GeneTree" id="ENSGT00390000004155"/>
<dbReference type="HOGENOM" id="CLU_003286_1_1_1"/>
<dbReference type="InParanoid" id="Q6IDD9"/>
<dbReference type="OMA" id="KSCEVQT"/>
<dbReference type="OrthoDB" id="202764at2759"/>
<dbReference type="PhylomeDB" id="Q6IDD9"/>
<dbReference type="BioGRID-ORCS" id="38895">
    <property type="hits" value="0 hits in 3 CRISPR screens"/>
</dbReference>
<dbReference type="GenomeRNAi" id="38895"/>
<dbReference type="PRO" id="PR:Q6IDD9"/>
<dbReference type="Proteomes" id="UP000000803">
    <property type="component" value="Chromosome 3L"/>
</dbReference>
<dbReference type="Bgee" id="FBgn0262579">
    <property type="expression patterns" value="Expressed in dorsal appendage forming follicle cell in ovary and 243 other cell types or tissues"/>
</dbReference>
<dbReference type="ExpressionAtlas" id="Q6IDD9">
    <property type="expression patterns" value="baseline and differential"/>
</dbReference>
<dbReference type="GO" id="GO:0030424">
    <property type="term" value="C:axon"/>
    <property type="evidence" value="ECO:0007669"/>
    <property type="project" value="UniProtKB-SubCell"/>
</dbReference>
<dbReference type="GO" id="GO:0005829">
    <property type="term" value="C:cytosol"/>
    <property type="evidence" value="ECO:0000314"/>
    <property type="project" value="FlyBase"/>
</dbReference>
<dbReference type="GO" id="GO:0030425">
    <property type="term" value="C:dendrite"/>
    <property type="evidence" value="ECO:0000318"/>
    <property type="project" value="GO_Central"/>
</dbReference>
<dbReference type="GO" id="GO:0005739">
    <property type="term" value="C:mitochondrion"/>
    <property type="evidence" value="ECO:0000250"/>
    <property type="project" value="FlyBase"/>
</dbReference>
<dbReference type="GO" id="GO:0043005">
    <property type="term" value="C:neuron projection"/>
    <property type="evidence" value="ECO:0000314"/>
    <property type="project" value="FlyBase"/>
</dbReference>
<dbReference type="GO" id="GO:0043025">
    <property type="term" value="C:neuronal cell body"/>
    <property type="evidence" value="ECO:0000314"/>
    <property type="project" value="FlyBase"/>
</dbReference>
<dbReference type="GO" id="GO:0003953">
    <property type="term" value="F:NAD+ nucleosidase activity"/>
    <property type="evidence" value="ECO:0000314"/>
    <property type="project" value="UniProtKB"/>
</dbReference>
<dbReference type="GO" id="GO:0061809">
    <property type="term" value="F:NAD+ nucleosidase activity, cyclic ADP-ribose generating"/>
    <property type="evidence" value="ECO:0007669"/>
    <property type="project" value="UniProtKB-EC"/>
</dbReference>
<dbReference type="GO" id="GO:0035591">
    <property type="term" value="F:signaling adaptor activity"/>
    <property type="evidence" value="ECO:0007669"/>
    <property type="project" value="InterPro"/>
</dbReference>
<dbReference type="GO" id="GO:0097677">
    <property type="term" value="F:STAT family protein binding"/>
    <property type="evidence" value="ECO:0000314"/>
    <property type="project" value="FlyBase"/>
</dbReference>
<dbReference type="GO" id="GO:0140374">
    <property type="term" value="P:antiviral innate immune response"/>
    <property type="evidence" value="ECO:0000315"/>
    <property type="project" value="FlyBase"/>
</dbReference>
<dbReference type="GO" id="GO:0051607">
    <property type="term" value="P:defense response to virus"/>
    <property type="evidence" value="ECO:0000315"/>
    <property type="project" value="FlyBase"/>
</dbReference>
<dbReference type="GO" id="GO:0019677">
    <property type="term" value="P:NAD catabolic process"/>
    <property type="evidence" value="ECO:0000314"/>
    <property type="project" value="UniProtKB"/>
</dbReference>
<dbReference type="GO" id="GO:0034128">
    <property type="term" value="P:negative regulation of MyD88-independent toll-like receptor signaling pathway"/>
    <property type="evidence" value="ECO:0007669"/>
    <property type="project" value="InterPro"/>
</dbReference>
<dbReference type="GO" id="GO:1904894">
    <property type="term" value="P:positive regulation of receptor signaling pathway via STAT"/>
    <property type="evidence" value="ECO:0000315"/>
    <property type="project" value="FlyBase"/>
</dbReference>
<dbReference type="GO" id="GO:0048678">
    <property type="term" value="P:response to axon injury"/>
    <property type="evidence" value="ECO:0000315"/>
    <property type="project" value="FlyBase"/>
</dbReference>
<dbReference type="GO" id="GO:0007165">
    <property type="term" value="P:signal transduction"/>
    <property type="evidence" value="ECO:0007669"/>
    <property type="project" value="InterPro"/>
</dbReference>
<dbReference type="CDD" id="cd09501">
    <property type="entry name" value="SAM_SARM1-like_repeat1"/>
    <property type="match status" value="1"/>
</dbReference>
<dbReference type="CDD" id="cd09502">
    <property type="entry name" value="SAM_SARM1-like_repeat2"/>
    <property type="match status" value="1"/>
</dbReference>
<dbReference type="CDD" id="cd24153">
    <property type="entry name" value="SARM1_N"/>
    <property type="match status" value="1"/>
</dbReference>
<dbReference type="FunFam" id="1.10.150.50:FF:000056">
    <property type="entry name" value="Ectoderm-expressed 4, isoform D"/>
    <property type="match status" value="1"/>
</dbReference>
<dbReference type="FunFam" id="1.10.150.50:FF:000043">
    <property type="entry name" value="Sterile alpha and TIR motif-containing 1"/>
    <property type="match status" value="1"/>
</dbReference>
<dbReference type="FunFam" id="3.40.50.10140:FF:000012">
    <property type="entry name" value="Sterile alpha and TIR motif-containing protein"/>
    <property type="match status" value="1"/>
</dbReference>
<dbReference type="Gene3D" id="1.25.10.10">
    <property type="entry name" value="Leucine-rich Repeat Variant"/>
    <property type="match status" value="1"/>
</dbReference>
<dbReference type="Gene3D" id="3.40.50.10140">
    <property type="entry name" value="Toll/interleukin-1 receptor homology (TIR) domain"/>
    <property type="match status" value="1"/>
</dbReference>
<dbReference type="Gene3D" id="1.10.150.50">
    <property type="entry name" value="Transcription Factor, Ets-1"/>
    <property type="match status" value="2"/>
</dbReference>
<dbReference type="InterPro" id="IPR011989">
    <property type="entry name" value="ARM-like"/>
</dbReference>
<dbReference type="InterPro" id="IPR016024">
    <property type="entry name" value="ARM-type_fold"/>
</dbReference>
<dbReference type="InterPro" id="IPR001660">
    <property type="entry name" value="SAM"/>
</dbReference>
<dbReference type="InterPro" id="IPR013761">
    <property type="entry name" value="SAM/pointed_sf"/>
</dbReference>
<dbReference type="InterPro" id="IPR039184">
    <property type="entry name" value="SARM1"/>
</dbReference>
<dbReference type="InterPro" id="IPR000157">
    <property type="entry name" value="TIR_dom"/>
</dbReference>
<dbReference type="InterPro" id="IPR035897">
    <property type="entry name" value="Toll_tir_struct_dom_sf"/>
</dbReference>
<dbReference type="PANTHER" id="PTHR22998:SF1">
    <property type="entry name" value="NAD(+) HYDROLASE SARM1"/>
    <property type="match status" value="1"/>
</dbReference>
<dbReference type="PANTHER" id="PTHR22998">
    <property type="entry name" value="SARM1"/>
    <property type="match status" value="1"/>
</dbReference>
<dbReference type="Pfam" id="PF07647">
    <property type="entry name" value="SAM_2"/>
    <property type="match status" value="2"/>
</dbReference>
<dbReference type="Pfam" id="PF13676">
    <property type="entry name" value="TIR_2"/>
    <property type="match status" value="1"/>
</dbReference>
<dbReference type="SMART" id="SM00454">
    <property type="entry name" value="SAM"/>
    <property type="match status" value="2"/>
</dbReference>
<dbReference type="SMART" id="SM00255">
    <property type="entry name" value="TIR"/>
    <property type="match status" value="1"/>
</dbReference>
<dbReference type="SUPFAM" id="SSF48371">
    <property type="entry name" value="ARM repeat"/>
    <property type="match status" value="1"/>
</dbReference>
<dbReference type="SUPFAM" id="SSF47769">
    <property type="entry name" value="SAM/Pointed domain"/>
    <property type="match status" value="2"/>
</dbReference>
<dbReference type="SUPFAM" id="SSF52200">
    <property type="entry name" value="Toll/Interleukin receptor TIR domain"/>
    <property type="match status" value="1"/>
</dbReference>
<dbReference type="PROSITE" id="PS50105">
    <property type="entry name" value="SAM_DOMAIN"/>
    <property type="match status" value="1"/>
</dbReference>
<dbReference type="PROSITE" id="PS50104">
    <property type="entry name" value="TIR"/>
    <property type="match status" value="1"/>
</dbReference>